<organism>
    <name type="scientific">Dictyostelium discoideum</name>
    <name type="common">Social amoeba</name>
    <dbReference type="NCBI Taxonomy" id="44689"/>
    <lineage>
        <taxon>Eukaryota</taxon>
        <taxon>Amoebozoa</taxon>
        <taxon>Evosea</taxon>
        <taxon>Eumycetozoa</taxon>
        <taxon>Dictyostelia</taxon>
        <taxon>Dictyosteliales</taxon>
        <taxon>Dictyosteliaceae</taxon>
        <taxon>Dictyostelium</taxon>
    </lineage>
</organism>
<accession>Q54PZ6</accession>
<accession>Q54PZ7</accession>
<sequence length="702" mass="80287">MDEDLNHNLFFKTIKFKFPKIFNTIESKCYTLCIPQSPSLYRMNITQKIVESHVFIESKYYQSEYETLNKESNYIIDNGYIMEKENNNKKVKIMFDELCYNKDYKSYRLICIEEPLTGGASGLNSSISRSESDLGDLLITQGIVKPQRPTFDQATQFFLLDSISTNINTIVFRKANQQLEEFERLHSINSKTDVDFFRKDLLLIHNRLMDDLVCANADFKQLHSNEKQMNSLSLILESYILGKIQNKLYGDLKRLYEKENQHLYEKMIYLSKLSFEDIGVKSDFEPHLTKAKEVIESFNTGINYINNNNNNNNNNNNNNNNNYNNNNNNNNNNNNNNNINNNINNNINNINSNNNNNNNNINNNNNNNNNNNNNNNNNNNNNNNEIIITPMDKLLSIVQGSREIEESIKARAILELADEDDILTITGDDALPLTAYLLIHARPKYLATDLAYCSKFILTDIFNSSYGYHLVNLIAAIDYIKSLDILSPTKTTTSSNNSRNTSPTSSTTNITYGGNSESLFAQSSVNNSTISSPKQPEDEAALFNNLKKSLSTMNLNPPQQSQQQQQQQQQQQQQQQESNFYSNNNNNNNNKTFNNSIPPHFISNQNSNNNNQFTSTPNLFNNNNNNTNSNNSNNNNNNNQHNSRYSTMSFSTNISNNTNISNKYVKAPAVISLDDDSDNLGDFIGKLRDMRDDEVIVSTHFK</sequence>
<gene>
    <name type="ORF">DDB_G0284213</name>
</gene>
<feature type="chain" id="PRO_0000350902" description="Putative uncharacterized protein DDB_G0284213">
    <location>
        <begin position="1"/>
        <end position="702"/>
    </location>
</feature>
<feature type="domain" description="VPS9" evidence="1">
    <location>
        <begin position="337"/>
        <end position="489"/>
    </location>
</feature>
<feature type="region of interest" description="Disordered" evidence="2">
    <location>
        <begin position="306"/>
        <end position="385"/>
    </location>
</feature>
<feature type="region of interest" description="Disordered" evidence="2">
    <location>
        <begin position="488"/>
        <end position="513"/>
    </location>
</feature>
<feature type="region of interest" description="Disordered" evidence="2">
    <location>
        <begin position="551"/>
        <end position="645"/>
    </location>
</feature>
<feature type="compositionally biased region" description="Low complexity" evidence="2">
    <location>
        <begin position="306"/>
        <end position="384"/>
    </location>
</feature>
<feature type="compositionally biased region" description="Low complexity" evidence="2">
    <location>
        <begin position="488"/>
        <end position="511"/>
    </location>
</feature>
<feature type="compositionally biased region" description="Low complexity" evidence="2">
    <location>
        <begin position="559"/>
        <end position="590"/>
    </location>
</feature>
<feature type="compositionally biased region" description="Low complexity" evidence="2">
    <location>
        <begin position="603"/>
        <end position="612"/>
    </location>
</feature>
<feature type="compositionally biased region" description="Low complexity" evidence="2">
    <location>
        <begin position="621"/>
        <end position="639"/>
    </location>
</feature>
<keyword id="KW-0343">GTPase activation</keyword>
<keyword id="KW-1185">Reference proteome</keyword>
<protein>
    <recommendedName>
        <fullName>Putative uncharacterized protein DDB_G0284213</fullName>
    </recommendedName>
</protein>
<evidence type="ECO:0000255" key="1">
    <source>
        <dbReference type="PROSITE-ProRule" id="PRU00550"/>
    </source>
</evidence>
<evidence type="ECO:0000256" key="2">
    <source>
        <dbReference type="SAM" id="MobiDB-lite"/>
    </source>
</evidence>
<evidence type="ECO:0000305" key="3"/>
<name>Y5897_DICDI</name>
<dbReference type="EMBL" id="AAFI02000064">
    <property type="protein sequence ID" value="EAL65295.1"/>
    <property type="status" value="ALT_INIT"/>
    <property type="molecule type" value="Genomic_DNA"/>
</dbReference>
<dbReference type="EMBL" id="AAFI02000064">
    <property type="protein sequence ID" value="EAL65296.1"/>
    <property type="status" value="ALT_SEQ"/>
    <property type="molecule type" value="Genomic_DNA"/>
</dbReference>
<dbReference type="RefSeq" id="XP_638648.1">
    <property type="nucleotide sequence ID" value="XM_633556.1"/>
</dbReference>
<dbReference type="RefSeq" id="XP_638649.1">
    <property type="nucleotide sequence ID" value="XM_633557.1"/>
</dbReference>
<dbReference type="FunCoup" id="Q54PZ6">
    <property type="interactions" value="11"/>
</dbReference>
<dbReference type="STRING" id="44689.Q54PZ6"/>
<dbReference type="PaxDb" id="44689-DDB0185896"/>
<dbReference type="EnsemblProtists" id="EAL65295">
    <property type="protein sequence ID" value="EAL65295"/>
    <property type="gene ID" value="DDB_G0284213"/>
</dbReference>
<dbReference type="EnsemblProtists" id="EAL65296">
    <property type="protein sequence ID" value="EAL65296"/>
    <property type="gene ID" value="DDB_G0284215"/>
</dbReference>
<dbReference type="GeneID" id="8624478"/>
<dbReference type="KEGG" id="ddi:DDB_G0284213"/>
<dbReference type="KEGG" id="ddi:DDB_G0284215"/>
<dbReference type="dictyBase" id="DDB_G0284213"/>
<dbReference type="VEuPathDB" id="AmoebaDB:DDB_G0284213"/>
<dbReference type="eggNOG" id="ENOG502RSNG">
    <property type="taxonomic scope" value="Eukaryota"/>
</dbReference>
<dbReference type="InParanoid" id="Q54PZ6"/>
<dbReference type="Reactome" id="R-DDI-8876198">
    <property type="pathway name" value="RAB GEFs exchange GTP for GDP on RABs"/>
</dbReference>
<dbReference type="PRO" id="PR:Q54PZ6"/>
<dbReference type="Proteomes" id="UP000002195">
    <property type="component" value="Chromosome 4"/>
</dbReference>
<dbReference type="GO" id="GO:0005769">
    <property type="term" value="C:early endosome"/>
    <property type="evidence" value="ECO:0000318"/>
    <property type="project" value="GO_Central"/>
</dbReference>
<dbReference type="GO" id="GO:0005770">
    <property type="term" value="C:late endosome"/>
    <property type="evidence" value="ECO:0000318"/>
    <property type="project" value="GO_Central"/>
</dbReference>
<dbReference type="GO" id="GO:0005886">
    <property type="term" value="C:plasma membrane"/>
    <property type="evidence" value="ECO:0000318"/>
    <property type="project" value="GO_Central"/>
</dbReference>
<dbReference type="GO" id="GO:0030133">
    <property type="term" value="C:transport vesicle"/>
    <property type="evidence" value="ECO:0000318"/>
    <property type="project" value="GO_Central"/>
</dbReference>
<dbReference type="GO" id="GO:0097422">
    <property type="term" value="C:tubular endosome"/>
    <property type="evidence" value="ECO:0000318"/>
    <property type="project" value="GO_Central"/>
</dbReference>
<dbReference type="GO" id="GO:0005096">
    <property type="term" value="F:GTPase activator activity"/>
    <property type="evidence" value="ECO:0007669"/>
    <property type="project" value="UniProtKB-KW"/>
</dbReference>
<dbReference type="GO" id="GO:0005085">
    <property type="term" value="F:guanyl-nucleotide exchange factor activity"/>
    <property type="evidence" value="ECO:0000318"/>
    <property type="project" value="GO_Central"/>
</dbReference>
<dbReference type="GO" id="GO:0000149">
    <property type="term" value="F:SNARE binding"/>
    <property type="evidence" value="ECO:0000318"/>
    <property type="project" value="GO_Central"/>
</dbReference>
<dbReference type="GO" id="GO:0045022">
    <property type="term" value="P:early endosome to late endosome transport"/>
    <property type="evidence" value="ECO:0000318"/>
    <property type="project" value="GO_Central"/>
</dbReference>
<dbReference type="FunFam" id="1.20.1050.80:FF:000013">
    <property type="entry name" value="Ankyrin repeat domain 27 (VPS9 domain)"/>
    <property type="match status" value="1"/>
</dbReference>
<dbReference type="Gene3D" id="1.20.1050.80">
    <property type="entry name" value="VPS9 domain"/>
    <property type="match status" value="1"/>
</dbReference>
<dbReference type="InterPro" id="IPR051248">
    <property type="entry name" value="UPF0507/Ank_repeat_27"/>
</dbReference>
<dbReference type="InterPro" id="IPR003123">
    <property type="entry name" value="VPS9"/>
</dbReference>
<dbReference type="InterPro" id="IPR037191">
    <property type="entry name" value="VPS9_dom_sf"/>
</dbReference>
<dbReference type="PANTHER" id="PTHR24170">
    <property type="entry name" value="ANKYRIN REPEAT DOMAIN-CONTAINING PROTEIN 27"/>
    <property type="match status" value="1"/>
</dbReference>
<dbReference type="PANTHER" id="PTHR24170:SF1">
    <property type="entry name" value="DOMAIN PROTEIN, PUTATIVE (AFU_ORTHOLOGUE AFUA_1G09870)-RELATED"/>
    <property type="match status" value="1"/>
</dbReference>
<dbReference type="Pfam" id="PF02204">
    <property type="entry name" value="VPS9"/>
    <property type="match status" value="1"/>
</dbReference>
<dbReference type="SUPFAM" id="SSF109993">
    <property type="entry name" value="VPS9 domain"/>
    <property type="match status" value="1"/>
</dbReference>
<dbReference type="PROSITE" id="PS51205">
    <property type="entry name" value="VPS9"/>
    <property type="match status" value="1"/>
</dbReference>
<proteinExistence type="predicted"/>
<comment type="sequence caution" evidence="3">
    <conflict type="erroneous initiation">
        <sequence resource="EMBL-CDS" id="EAL65295"/>
    </conflict>
    <text>Truncated N-terminus.</text>
</comment>
<comment type="sequence caution" evidence="3">
    <conflict type="erroneous gene model prediction">
        <sequence resource="EMBL-CDS" id="EAL65296"/>
    </conflict>
</comment>
<reference key="1">
    <citation type="journal article" date="2005" name="Nature">
        <title>The genome of the social amoeba Dictyostelium discoideum.</title>
        <authorList>
            <person name="Eichinger L."/>
            <person name="Pachebat J.A."/>
            <person name="Gloeckner G."/>
            <person name="Rajandream M.A."/>
            <person name="Sucgang R."/>
            <person name="Berriman M."/>
            <person name="Song J."/>
            <person name="Olsen R."/>
            <person name="Szafranski K."/>
            <person name="Xu Q."/>
            <person name="Tunggal B."/>
            <person name="Kummerfeld S."/>
            <person name="Madera M."/>
            <person name="Konfortov B.A."/>
            <person name="Rivero F."/>
            <person name="Bankier A.T."/>
            <person name="Lehmann R."/>
            <person name="Hamlin N."/>
            <person name="Davies R."/>
            <person name="Gaudet P."/>
            <person name="Fey P."/>
            <person name="Pilcher K."/>
            <person name="Chen G."/>
            <person name="Saunders D."/>
            <person name="Sodergren E.J."/>
            <person name="Davis P."/>
            <person name="Kerhornou A."/>
            <person name="Nie X."/>
            <person name="Hall N."/>
            <person name="Anjard C."/>
            <person name="Hemphill L."/>
            <person name="Bason N."/>
            <person name="Farbrother P."/>
            <person name="Desany B."/>
            <person name="Just E."/>
            <person name="Morio T."/>
            <person name="Rost R."/>
            <person name="Churcher C.M."/>
            <person name="Cooper J."/>
            <person name="Haydock S."/>
            <person name="van Driessche N."/>
            <person name="Cronin A."/>
            <person name="Goodhead I."/>
            <person name="Muzny D.M."/>
            <person name="Mourier T."/>
            <person name="Pain A."/>
            <person name="Lu M."/>
            <person name="Harper D."/>
            <person name="Lindsay R."/>
            <person name="Hauser H."/>
            <person name="James K.D."/>
            <person name="Quiles M."/>
            <person name="Madan Babu M."/>
            <person name="Saito T."/>
            <person name="Buchrieser C."/>
            <person name="Wardroper A."/>
            <person name="Felder M."/>
            <person name="Thangavelu M."/>
            <person name="Johnson D."/>
            <person name="Knights A."/>
            <person name="Loulseged H."/>
            <person name="Mungall K.L."/>
            <person name="Oliver K."/>
            <person name="Price C."/>
            <person name="Quail M.A."/>
            <person name="Urushihara H."/>
            <person name="Hernandez J."/>
            <person name="Rabbinowitsch E."/>
            <person name="Steffen D."/>
            <person name="Sanders M."/>
            <person name="Ma J."/>
            <person name="Kohara Y."/>
            <person name="Sharp S."/>
            <person name="Simmonds M.N."/>
            <person name="Spiegler S."/>
            <person name="Tivey A."/>
            <person name="Sugano S."/>
            <person name="White B."/>
            <person name="Walker D."/>
            <person name="Woodward J.R."/>
            <person name="Winckler T."/>
            <person name="Tanaka Y."/>
            <person name="Shaulsky G."/>
            <person name="Schleicher M."/>
            <person name="Weinstock G.M."/>
            <person name="Rosenthal A."/>
            <person name="Cox E.C."/>
            <person name="Chisholm R.L."/>
            <person name="Gibbs R.A."/>
            <person name="Loomis W.F."/>
            <person name="Platzer M."/>
            <person name="Kay R.R."/>
            <person name="Williams J.G."/>
            <person name="Dear P.H."/>
            <person name="Noegel A.A."/>
            <person name="Barrell B.G."/>
            <person name="Kuspa A."/>
        </authorList>
    </citation>
    <scope>NUCLEOTIDE SEQUENCE [LARGE SCALE GENOMIC DNA]</scope>
    <source>
        <strain>AX4</strain>
    </source>
</reference>